<keyword id="KW-0028">Amino-acid biosynthesis</keyword>
<keyword id="KW-0057">Aromatic amino acid biosynthesis</keyword>
<keyword id="KW-0456">Lyase</keyword>
<keyword id="KW-1185">Reference proteome</keyword>
<feature type="chain" id="PRO_0000159901" description="3-dehydroquinate dehydratase">
    <location>
        <begin position="1"/>
        <end position="160"/>
    </location>
</feature>
<feature type="active site" description="Proton acceptor" evidence="1">
    <location>
        <position position="28"/>
    </location>
</feature>
<feature type="active site" description="Proton donor" evidence="1">
    <location>
        <position position="105"/>
    </location>
</feature>
<feature type="binding site" evidence="1">
    <location>
        <position position="79"/>
    </location>
    <ligand>
        <name>substrate</name>
    </ligand>
</feature>
<feature type="binding site" evidence="1">
    <location>
        <position position="85"/>
    </location>
    <ligand>
        <name>substrate</name>
    </ligand>
</feature>
<feature type="binding site" evidence="1">
    <location>
        <position position="92"/>
    </location>
    <ligand>
        <name>substrate</name>
    </ligand>
</feature>
<feature type="binding site" evidence="1">
    <location>
        <begin position="106"/>
        <end position="107"/>
    </location>
    <ligand>
        <name>substrate</name>
    </ligand>
</feature>
<feature type="binding site" evidence="1">
    <location>
        <position position="116"/>
    </location>
    <ligand>
        <name>substrate</name>
    </ligand>
</feature>
<feature type="site" description="Transition state stabilizer" evidence="1">
    <location>
        <position position="23"/>
    </location>
</feature>
<proteinExistence type="inferred from homology"/>
<name>AROQ_GLOVI</name>
<evidence type="ECO:0000255" key="1">
    <source>
        <dbReference type="HAMAP-Rule" id="MF_00169"/>
    </source>
</evidence>
<accession>Q7NHU3</accession>
<comment type="function">
    <text evidence="1">Catalyzes a trans-dehydration via an enolate intermediate.</text>
</comment>
<comment type="catalytic activity">
    <reaction evidence="1">
        <text>3-dehydroquinate = 3-dehydroshikimate + H2O</text>
        <dbReference type="Rhea" id="RHEA:21096"/>
        <dbReference type="ChEBI" id="CHEBI:15377"/>
        <dbReference type="ChEBI" id="CHEBI:16630"/>
        <dbReference type="ChEBI" id="CHEBI:32364"/>
        <dbReference type="EC" id="4.2.1.10"/>
    </reaction>
</comment>
<comment type="pathway">
    <text evidence="1">Metabolic intermediate biosynthesis; chorismate biosynthesis; chorismate from D-erythrose 4-phosphate and phosphoenolpyruvate: step 3/7.</text>
</comment>
<comment type="subunit">
    <text evidence="1">Homododecamer.</text>
</comment>
<comment type="similarity">
    <text evidence="1">Belongs to the type-II 3-dehydroquinase family.</text>
</comment>
<gene>
    <name evidence="1" type="primary">aroQ</name>
    <name type="ordered locus">glr2442</name>
</gene>
<sequence length="160" mass="17369">MPIAASLRVLLLNGPNLSLLGRREVDVYGTVTLADIERTLQLDAQDLDVELSCLQSNHEGVLIDAIHDAFGRCDGLVINPGGLTHTSVALRDAIAGVGLPTVEVHMSNVYRRESFRHHSFIAPVAVGQISGFGADSYRLGLRAIALFLRRRAEQDEGPCR</sequence>
<protein>
    <recommendedName>
        <fullName evidence="1">3-dehydroquinate dehydratase</fullName>
        <shortName evidence="1">3-dehydroquinase</shortName>
        <ecNumber evidence="1">4.2.1.10</ecNumber>
    </recommendedName>
    <alternativeName>
        <fullName evidence="1">Type II DHQase</fullName>
    </alternativeName>
</protein>
<organism>
    <name type="scientific">Gloeobacter violaceus (strain ATCC 29082 / PCC 7421)</name>
    <dbReference type="NCBI Taxonomy" id="251221"/>
    <lineage>
        <taxon>Bacteria</taxon>
        <taxon>Bacillati</taxon>
        <taxon>Cyanobacteriota</taxon>
        <taxon>Cyanophyceae</taxon>
        <taxon>Gloeobacterales</taxon>
        <taxon>Gloeobacteraceae</taxon>
        <taxon>Gloeobacter</taxon>
    </lineage>
</organism>
<reference key="1">
    <citation type="journal article" date="2003" name="DNA Res.">
        <title>Complete genome structure of Gloeobacter violaceus PCC 7421, a cyanobacterium that lacks thylakoids.</title>
        <authorList>
            <person name="Nakamura Y."/>
            <person name="Kaneko T."/>
            <person name="Sato S."/>
            <person name="Mimuro M."/>
            <person name="Miyashita H."/>
            <person name="Tsuchiya T."/>
            <person name="Sasamoto S."/>
            <person name="Watanabe A."/>
            <person name="Kawashima K."/>
            <person name="Kishida Y."/>
            <person name="Kiyokawa C."/>
            <person name="Kohara M."/>
            <person name="Matsumoto M."/>
            <person name="Matsuno A."/>
            <person name="Nakazaki N."/>
            <person name="Shimpo S."/>
            <person name="Takeuchi C."/>
            <person name="Yamada M."/>
            <person name="Tabata S."/>
        </authorList>
    </citation>
    <scope>NUCLEOTIDE SEQUENCE [LARGE SCALE GENOMIC DNA]</scope>
    <source>
        <strain>ATCC 29082 / PCC 7421</strain>
    </source>
</reference>
<dbReference type="EC" id="4.2.1.10" evidence="1"/>
<dbReference type="EMBL" id="BA000045">
    <property type="protein sequence ID" value="BAC90383.1"/>
    <property type="molecule type" value="Genomic_DNA"/>
</dbReference>
<dbReference type="RefSeq" id="NP_925388.1">
    <property type="nucleotide sequence ID" value="NC_005125.1"/>
</dbReference>
<dbReference type="RefSeq" id="WP_011142437.1">
    <property type="nucleotide sequence ID" value="NC_005125.1"/>
</dbReference>
<dbReference type="SMR" id="Q7NHU3"/>
<dbReference type="FunCoup" id="Q7NHU3">
    <property type="interactions" value="80"/>
</dbReference>
<dbReference type="STRING" id="251221.gene:10759939"/>
<dbReference type="EnsemblBacteria" id="BAC90383">
    <property type="protein sequence ID" value="BAC90383"/>
    <property type="gene ID" value="BAC90383"/>
</dbReference>
<dbReference type="KEGG" id="gvi:glr2442"/>
<dbReference type="PATRIC" id="fig|251221.4.peg.2478"/>
<dbReference type="eggNOG" id="COG0757">
    <property type="taxonomic scope" value="Bacteria"/>
</dbReference>
<dbReference type="HOGENOM" id="CLU_090968_1_0_3"/>
<dbReference type="InParanoid" id="Q7NHU3"/>
<dbReference type="OrthoDB" id="9790793at2"/>
<dbReference type="PhylomeDB" id="Q7NHU3"/>
<dbReference type="UniPathway" id="UPA00053">
    <property type="reaction ID" value="UER00086"/>
</dbReference>
<dbReference type="Proteomes" id="UP000000557">
    <property type="component" value="Chromosome"/>
</dbReference>
<dbReference type="GO" id="GO:0003855">
    <property type="term" value="F:3-dehydroquinate dehydratase activity"/>
    <property type="evidence" value="ECO:0000318"/>
    <property type="project" value="GO_Central"/>
</dbReference>
<dbReference type="GO" id="GO:0008652">
    <property type="term" value="P:amino acid biosynthetic process"/>
    <property type="evidence" value="ECO:0007669"/>
    <property type="project" value="UniProtKB-KW"/>
</dbReference>
<dbReference type="GO" id="GO:0009073">
    <property type="term" value="P:aromatic amino acid family biosynthetic process"/>
    <property type="evidence" value="ECO:0007669"/>
    <property type="project" value="UniProtKB-KW"/>
</dbReference>
<dbReference type="GO" id="GO:0009423">
    <property type="term" value="P:chorismate biosynthetic process"/>
    <property type="evidence" value="ECO:0007669"/>
    <property type="project" value="UniProtKB-UniRule"/>
</dbReference>
<dbReference type="GO" id="GO:0019631">
    <property type="term" value="P:quinate catabolic process"/>
    <property type="evidence" value="ECO:0000318"/>
    <property type="project" value="GO_Central"/>
</dbReference>
<dbReference type="CDD" id="cd00466">
    <property type="entry name" value="DHQase_II"/>
    <property type="match status" value="1"/>
</dbReference>
<dbReference type="Gene3D" id="3.40.50.9100">
    <property type="entry name" value="Dehydroquinase, class II"/>
    <property type="match status" value="1"/>
</dbReference>
<dbReference type="HAMAP" id="MF_00169">
    <property type="entry name" value="AroQ"/>
    <property type="match status" value="1"/>
</dbReference>
<dbReference type="InterPro" id="IPR001874">
    <property type="entry name" value="DHquinase_II"/>
</dbReference>
<dbReference type="InterPro" id="IPR018509">
    <property type="entry name" value="DHquinase_II_CS"/>
</dbReference>
<dbReference type="InterPro" id="IPR036441">
    <property type="entry name" value="DHquinase_II_sf"/>
</dbReference>
<dbReference type="NCBIfam" id="TIGR01088">
    <property type="entry name" value="aroQ"/>
    <property type="match status" value="1"/>
</dbReference>
<dbReference type="NCBIfam" id="NF003805">
    <property type="entry name" value="PRK05395.1-2"/>
    <property type="match status" value="1"/>
</dbReference>
<dbReference type="NCBIfam" id="NF003806">
    <property type="entry name" value="PRK05395.1-3"/>
    <property type="match status" value="1"/>
</dbReference>
<dbReference type="NCBIfam" id="NF003807">
    <property type="entry name" value="PRK05395.1-4"/>
    <property type="match status" value="1"/>
</dbReference>
<dbReference type="PANTHER" id="PTHR21272">
    <property type="entry name" value="CATABOLIC 3-DEHYDROQUINASE"/>
    <property type="match status" value="1"/>
</dbReference>
<dbReference type="PANTHER" id="PTHR21272:SF3">
    <property type="entry name" value="CATABOLIC 3-DEHYDROQUINASE"/>
    <property type="match status" value="1"/>
</dbReference>
<dbReference type="Pfam" id="PF01220">
    <property type="entry name" value="DHquinase_II"/>
    <property type="match status" value="1"/>
</dbReference>
<dbReference type="PIRSF" id="PIRSF001399">
    <property type="entry name" value="DHquinase_II"/>
    <property type="match status" value="1"/>
</dbReference>
<dbReference type="SUPFAM" id="SSF52304">
    <property type="entry name" value="Type II 3-dehydroquinate dehydratase"/>
    <property type="match status" value="1"/>
</dbReference>
<dbReference type="PROSITE" id="PS01029">
    <property type="entry name" value="DEHYDROQUINASE_II"/>
    <property type="match status" value="1"/>
</dbReference>